<keyword id="KW-0067">ATP-binding</keyword>
<keyword id="KW-0414">Isoprene biosynthesis</keyword>
<keyword id="KW-0418">Kinase</keyword>
<keyword id="KW-0547">Nucleotide-binding</keyword>
<keyword id="KW-0808">Transferase</keyword>
<feature type="chain" id="PRO_1000190700" description="4-diphosphocytidyl-2-C-methyl-D-erythritol kinase">
    <location>
        <begin position="1"/>
        <end position="284"/>
    </location>
</feature>
<feature type="active site" evidence="1">
    <location>
        <position position="14"/>
    </location>
</feature>
<feature type="active site" evidence="1">
    <location>
        <position position="140"/>
    </location>
</feature>
<feature type="binding site" evidence="1">
    <location>
        <begin position="98"/>
        <end position="108"/>
    </location>
    <ligand>
        <name>ATP</name>
        <dbReference type="ChEBI" id="CHEBI:30616"/>
    </ligand>
</feature>
<proteinExistence type="inferred from homology"/>
<sequence>MPAAISRNWPAPAKLNLFLHINGRRADGYHELQTLFQFIDCCDMLDFKVTETPELILHSNMSGVVADSDNLILRAAKSLQQTTGFNGGAEIWLDKRLPMGGGLGGGSSDAATTLVALNKLWHTQLSTEELAKIGLKLGADIPVFIHGFAAFAEGVGERLQAVNPSEPWYLVIAPDAHVSTADVFQDPLLPRDTPKLAIDTLMSQPWANDCQKLVVSKYPQVAKALGWLLEYAPSRMTGTGACVFGEFTQQQQALAALAKLPSEMQGFVAQGMNLSPLITRLSHP</sequence>
<evidence type="ECO:0000255" key="1">
    <source>
        <dbReference type="HAMAP-Rule" id="MF_00061"/>
    </source>
</evidence>
<gene>
    <name evidence="1" type="primary">ispE</name>
    <name type="ordered locus">Sbal223_3549</name>
</gene>
<dbReference type="EC" id="2.7.1.148" evidence="1"/>
<dbReference type="EMBL" id="CP001252">
    <property type="protein sequence ID" value="ACK48031.1"/>
    <property type="molecule type" value="Genomic_DNA"/>
</dbReference>
<dbReference type="RefSeq" id="WP_006080256.1">
    <property type="nucleotide sequence ID" value="NC_011663.1"/>
</dbReference>
<dbReference type="SMR" id="B8E818"/>
<dbReference type="KEGG" id="sbp:Sbal223_3549"/>
<dbReference type="HOGENOM" id="CLU_053057_3_0_6"/>
<dbReference type="UniPathway" id="UPA00056">
    <property type="reaction ID" value="UER00094"/>
</dbReference>
<dbReference type="Proteomes" id="UP000002507">
    <property type="component" value="Chromosome"/>
</dbReference>
<dbReference type="GO" id="GO:0050515">
    <property type="term" value="F:4-(cytidine 5'-diphospho)-2-C-methyl-D-erythritol kinase activity"/>
    <property type="evidence" value="ECO:0007669"/>
    <property type="project" value="UniProtKB-UniRule"/>
</dbReference>
<dbReference type="GO" id="GO:0005524">
    <property type="term" value="F:ATP binding"/>
    <property type="evidence" value="ECO:0007669"/>
    <property type="project" value="UniProtKB-UniRule"/>
</dbReference>
<dbReference type="GO" id="GO:0019288">
    <property type="term" value="P:isopentenyl diphosphate biosynthetic process, methylerythritol 4-phosphate pathway"/>
    <property type="evidence" value="ECO:0007669"/>
    <property type="project" value="UniProtKB-UniRule"/>
</dbReference>
<dbReference type="GO" id="GO:0016114">
    <property type="term" value="P:terpenoid biosynthetic process"/>
    <property type="evidence" value="ECO:0007669"/>
    <property type="project" value="InterPro"/>
</dbReference>
<dbReference type="FunFam" id="3.30.230.10:FF:000022">
    <property type="entry name" value="4-diphosphocytidyl-2-C-methyl-D-erythritol kinase"/>
    <property type="match status" value="1"/>
</dbReference>
<dbReference type="Gene3D" id="3.30.230.10">
    <property type="match status" value="1"/>
</dbReference>
<dbReference type="Gene3D" id="3.30.70.890">
    <property type="entry name" value="GHMP kinase, C-terminal domain"/>
    <property type="match status" value="1"/>
</dbReference>
<dbReference type="HAMAP" id="MF_00061">
    <property type="entry name" value="IspE"/>
    <property type="match status" value="1"/>
</dbReference>
<dbReference type="InterPro" id="IPR013750">
    <property type="entry name" value="GHMP_kinase_C_dom"/>
</dbReference>
<dbReference type="InterPro" id="IPR036554">
    <property type="entry name" value="GHMP_kinase_C_sf"/>
</dbReference>
<dbReference type="InterPro" id="IPR006204">
    <property type="entry name" value="GHMP_kinase_N_dom"/>
</dbReference>
<dbReference type="InterPro" id="IPR004424">
    <property type="entry name" value="IspE"/>
</dbReference>
<dbReference type="InterPro" id="IPR020568">
    <property type="entry name" value="Ribosomal_Su5_D2-typ_SF"/>
</dbReference>
<dbReference type="InterPro" id="IPR014721">
    <property type="entry name" value="Ribsml_uS5_D2-typ_fold_subgr"/>
</dbReference>
<dbReference type="NCBIfam" id="TIGR00154">
    <property type="entry name" value="ispE"/>
    <property type="match status" value="1"/>
</dbReference>
<dbReference type="PANTHER" id="PTHR43527">
    <property type="entry name" value="4-DIPHOSPHOCYTIDYL-2-C-METHYL-D-ERYTHRITOL KINASE, CHLOROPLASTIC"/>
    <property type="match status" value="1"/>
</dbReference>
<dbReference type="PANTHER" id="PTHR43527:SF2">
    <property type="entry name" value="4-DIPHOSPHOCYTIDYL-2-C-METHYL-D-ERYTHRITOL KINASE, CHLOROPLASTIC"/>
    <property type="match status" value="1"/>
</dbReference>
<dbReference type="Pfam" id="PF08544">
    <property type="entry name" value="GHMP_kinases_C"/>
    <property type="match status" value="1"/>
</dbReference>
<dbReference type="Pfam" id="PF00288">
    <property type="entry name" value="GHMP_kinases_N"/>
    <property type="match status" value="1"/>
</dbReference>
<dbReference type="PIRSF" id="PIRSF010376">
    <property type="entry name" value="IspE"/>
    <property type="match status" value="1"/>
</dbReference>
<dbReference type="SUPFAM" id="SSF55060">
    <property type="entry name" value="GHMP Kinase, C-terminal domain"/>
    <property type="match status" value="1"/>
</dbReference>
<dbReference type="SUPFAM" id="SSF54211">
    <property type="entry name" value="Ribosomal protein S5 domain 2-like"/>
    <property type="match status" value="1"/>
</dbReference>
<comment type="function">
    <text evidence="1">Catalyzes the phosphorylation of the position 2 hydroxy group of 4-diphosphocytidyl-2C-methyl-D-erythritol.</text>
</comment>
<comment type="catalytic activity">
    <reaction evidence="1">
        <text>4-CDP-2-C-methyl-D-erythritol + ATP = 4-CDP-2-C-methyl-D-erythritol 2-phosphate + ADP + H(+)</text>
        <dbReference type="Rhea" id="RHEA:18437"/>
        <dbReference type="ChEBI" id="CHEBI:15378"/>
        <dbReference type="ChEBI" id="CHEBI:30616"/>
        <dbReference type="ChEBI" id="CHEBI:57823"/>
        <dbReference type="ChEBI" id="CHEBI:57919"/>
        <dbReference type="ChEBI" id="CHEBI:456216"/>
        <dbReference type="EC" id="2.7.1.148"/>
    </reaction>
</comment>
<comment type="pathway">
    <text evidence="1">Isoprenoid biosynthesis; isopentenyl diphosphate biosynthesis via DXP pathway; isopentenyl diphosphate from 1-deoxy-D-xylulose 5-phosphate: step 3/6.</text>
</comment>
<comment type="similarity">
    <text evidence="1">Belongs to the GHMP kinase family. IspE subfamily.</text>
</comment>
<reference key="1">
    <citation type="submission" date="2008-12" db="EMBL/GenBank/DDBJ databases">
        <title>Complete sequence of chromosome of Shewanella baltica OS223.</title>
        <authorList>
            <consortium name="US DOE Joint Genome Institute"/>
            <person name="Lucas S."/>
            <person name="Copeland A."/>
            <person name="Lapidus A."/>
            <person name="Glavina del Rio T."/>
            <person name="Dalin E."/>
            <person name="Tice H."/>
            <person name="Bruce D."/>
            <person name="Goodwin L."/>
            <person name="Pitluck S."/>
            <person name="Chertkov O."/>
            <person name="Meincke L."/>
            <person name="Brettin T."/>
            <person name="Detter J.C."/>
            <person name="Han C."/>
            <person name="Kuske C.R."/>
            <person name="Larimer F."/>
            <person name="Land M."/>
            <person name="Hauser L."/>
            <person name="Kyrpides N."/>
            <person name="Ovchinnikova G."/>
            <person name="Brettar I."/>
            <person name="Rodrigues J."/>
            <person name="Konstantinidis K."/>
            <person name="Tiedje J."/>
        </authorList>
    </citation>
    <scope>NUCLEOTIDE SEQUENCE [LARGE SCALE GENOMIC DNA]</scope>
    <source>
        <strain>OS223</strain>
    </source>
</reference>
<organism>
    <name type="scientific">Shewanella baltica (strain OS223)</name>
    <dbReference type="NCBI Taxonomy" id="407976"/>
    <lineage>
        <taxon>Bacteria</taxon>
        <taxon>Pseudomonadati</taxon>
        <taxon>Pseudomonadota</taxon>
        <taxon>Gammaproteobacteria</taxon>
        <taxon>Alteromonadales</taxon>
        <taxon>Shewanellaceae</taxon>
        <taxon>Shewanella</taxon>
    </lineage>
</organism>
<protein>
    <recommendedName>
        <fullName evidence="1">4-diphosphocytidyl-2-C-methyl-D-erythritol kinase</fullName>
        <shortName evidence="1">CMK</shortName>
        <ecNumber evidence="1">2.7.1.148</ecNumber>
    </recommendedName>
    <alternativeName>
        <fullName evidence="1">4-(cytidine-5'-diphospho)-2-C-methyl-D-erythritol kinase</fullName>
    </alternativeName>
</protein>
<name>ISPE_SHEB2</name>
<accession>B8E818</accession>